<keyword id="KW-0456">Lyase</keyword>
<keyword id="KW-0501">Molybdenum cofactor biosynthesis</keyword>
<keyword id="KW-1185">Reference proteome</keyword>
<comment type="function">
    <text evidence="1">Catalyzes the conversion of (8S)-3',8-cyclo-7,8-dihydroguanosine 5'-triphosphate to cyclic pyranopterin monophosphate (cPMP).</text>
</comment>
<comment type="catalytic activity">
    <reaction evidence="1">
        <text>(8S)-3',8-cyclo-7,8-dihydroguanosine 5'-triphosphate = cyclic pyranopterin phosphate + diphosphate</text>
        <dbReference type="Rhea" id="RHEA:49580"/>
        <dbReference type="ChEBI" id="CHEBI:33019"/>
        <dbReference type="ChEBI" id="CHEBI:59648"/>
        <dbReference type="ChEBI" id="CHEBI:131766"/>
        <dbReference type="EC" id="4.6.1.17"/>
    </reaction>
</comment>
<comment type="pathway">
    <text evidence="1">Cofactor biosynthesis; molybdopterin biosynthesis.</text>
</comment>
<comment type="subunit">
    <text evidence="1">Homohexamer; trimer of dimers.</text>
</comment>
<comment type="similarity">
    <text evidence="1">Belongs to the MoaC family.</text>
</comment>
<proteinExistence type="inferred from homology"/>
<sequence length="168" mass="17688">MQAPFPKNSANLTHLDGQGQAQMVDVSDKAQTIRQAVAAAQVRMLPATLEAIQAGNTPKGDVLATARLAGIMAAKQTANLIPLCHPLPLQKVAVEITPDPQLPGYQIQATVKTKAETGVEMEALTAVSIAALTLYDMAKALEKSMQIESIRLVSKTGGKSGDYFPPAP</sequence>
<gene>
    <name evidence="1" type="primary">moaC</name>
    <name type="ordered locus">alr3382</name>
</gene>
<name>MOAC_NOSS1</name>
<feature type="chain" id="PRO_0000097782" description="Cyclic pyranopterin monophosphate synthase">
    <location>
        <begin position="1"/>
        <end position="168"/>
    </location>
</feature>
<feature type="active site" evidence="1">
    <location>
        <position position="136"/>
    </location>
</feature>
<feature type="binding site" evidence="1">
    <location>
        <begin position="83"/>
        <end position="85"/>
    </location>
    <ligand>
        <name>substrate</name>
    </ligand>
</feature>
<feature type="binding site" evidence="1">
    <location>
        <begin position="121"/>
        <end position="122"/>
    </location>
    <ligand>
        <name>substrate</name>
    </ligand>
</feature>
<evidence type="ECO:0000255" key="1">
    <source>
        <dbReference type="HAMAP-Rule" id="MF_01224"/>
    </source>
</evidence>
<accession>Q8YRR1</accession>
<protein>
    <recommendedName>
        <fullName evidence="1">Cyclic pyranopterin monophosphate synthase</fullName>
        <ecNumber evidence="1">4.6.1.17</ecNumber>
    </recommendedName>
    <alternativeName>
        <fullName evidence="1">Molybdenum cofactor biosynthesis protein C</fullName>
    </alternativeName>
</protein>
<organism>
    <name type="scientific">Nostoc sp. (strain PCC 7120 / SAG 25.82 / UTEX 2576)</name>
    <dbReference type="NCBI Taxonomy" id="103690"/>
    <lineage>
        <taxon>Bacteria</taxon>
        <taxon>Bacillati</taxon>
        <taxon>Cyanobacteriota</taxon>
        <taxon>Cyanophyceae</taxon>
        <taxon>Nostocales</taxon>
        <taxon>Nostocaceae</taxon>
        <taxon>Nostoc</taxon>
    </lineage>
</organism>
<reference key="1">
    <citation type="journal article" date="2001" name="DNA Res.">
        <title>Complete genomic sequence of the filamentous nitrogen-fixing cyanobacterium Anabaena sp. strain PCC 7120.</title>
        <authorList>
            <person name="Kaneko T."/>
            <person name="Nakamura Y."/>
            <person name="Wolk C.P."/>
            <person name="Kuritz T."/>
            <person name="Sasamoto S."/>
            <person name="Watanabe A."/>
            <person name="Iriguchi M."/>
            <person name="Ishikawa A."/>
            <person name="Kawashima K."/>
            <person name="Kimura T."/>
            <person name="Kishida Y."/>
            <person name="Kohara M."/>
            <person name="Matsumoto M."/>
            <person name="Matsuno A."/>
            <person name="Muraki A."/>
            <person name="Nakazaki N."/>
            <person name="Shimpo S."/>
            <person name="Sugimoto M."/>
            <person name="Takazawa M."/>
            <person name="Yamada M."/>
            <person name="Yasuda M."/>
            <person name="Tabata S."/>
        </authorList>
    </citation>
    <scope>NUCLEOTIDE SEQUENCE [LARGE SCALE GENOMIC DNA]</scope>
    <source>
        <strain>PCC 7120 / SAG 25.82 / UTEX 2576</strain>
    </source>
</reference>
<dbReference type="EC" id="4.6.1.17" evidence="1"/>
<dbReference type="EMBL" id="BA000019">
    <property type="protein sequence ID" value="BAB75081.1"/>
    <property type="molecule type" value="Genomic_DNA"/>
</dbReference>
<dbReference type="PIR" id="AG2228">
    <property type="entry name" value="AG2228"/>
</dbReference>
<dbReference type="RefSeq" id="WP_010997533.1">
    <property type="nucleotide sequence ID" value="NZ_RSCN01000038.1"/>
</dbReference>
<dbReference type="SMR" id="Q8YRR1"/>
<dbReference type="STRING" id="103690.gene:10495421"/>
<dbReference type="KEGG" id="ana:alr3382"/>
<dbReference type="eggNOG" id="COG0315">
    <property type="taxonomic scope" value="Bacteria"/>
</dbReference>
<dbReference type="OrthoDB" id="9794429at2"/>
<dbReference type="UniPathway" id="UPA00344"/>
<dbReference type="Proteomes" id="UP000002483">
    <property type="component" value="Chromosome"/>
</dbReference>
<dbReference type="GO" id="GO:0061799">
    <property type="term" value="F:cyclic pyranopterin monophosphate synthase activity"/>
    <property type="evidence" value="ECO:0007669"/>
    <property type="project" value="UniProtKB-UniRule"/>
</dbReference>
<dbReference type="GO" id="GO:0006777">
    <property type="term" value="P:Mo-molybdopterin cofactor biosynthetic process"/>
    <property type="evidence" value="ECO:0007669"/>
    <property type="project" value="UniProtKB-UniRule"/>
</dbReference>
<dbReference type="CDD" id="cd01420">
    <property type="entry name" value="MoaC_PE"/>
    <property type="match status" value="1"/>
</dbReference>
<dbReference type="Gene3D" id="3.30.70.640">
    <property type="entry name" value="Molybdopterin cofactor biosynthesis C (MoaC) domain"/>
    <property type="match status" value="1"/>
</dbReference>
<dbReference type="HAMAP" id="MF_01224_B">
    <property type="entry name" value="MoaC_B"/>
    <property type="match status" value="1"/>
</dbReference>
<dbReference type="InterPro" id="IPR023045">
    <property type="entry name" value="MoaC"/>
</dbReference>
<dbReference type="InterPro" id="IPR047594">
    <property type="entry name" value="MoaC_bact/euk"/>
</dbReference>
<dbReference type="InterPro" id="IPR036522">
    <property type="entry name" value="MoaC_sf"/>
</dbReference>
<dbReference type="InterPro" id="IPR050105">
    <property type="entry name" value="MoCo_biosynth_MoaA/MoaC"/>
</dbReference>
<dbReference type="InterPro" id="IPR002820">
    <property type="entry name" value="Mopterin_CF_biosynth-C_dom"/>
</dbReference>
<dbReference type="NCBIfam" id="TIGR00581">
    <property type="entry name" value="moaC"/>
    <property type="match status" value="1"/>
</dbReference>
<dbReference type="NCBIfam" id="NF006870">
    <property type="entry name" value="PRK09364.1"/>
    <property type="match status" value="1"/>
</dbReference>
<dbReference type="PANTHER" id="PTHR22960:SF29">
    <property type="entry name" value="CYCLIC PYRANOPTERIN MONOPHOSPHATE SYNTHASE"/>
    <property type="match status" value="1"/>
</dbReference>
<dbReference type="PANTHER" id="PTHR22960">
    <property type="entry name" value="MOLYBDOPTERIN COFACTOR SYNTHESIS PROTEIN A"/>
    <property type="match status" value="1"/>
</dbReference>
<dbReference type="Pfam" id="PF01967">
    <property type="entry name" value="MoaC"/>
    <property type="match status" value="1"/>
</dbReference>
<dbReference type="SUPFAM" id="SSF55040">
    <property type="entry name" value="Molybdenum cofactor biosynthesis protein C, MoaC"/>
    <property type="match status" value="1"/>
</dbReference>